<evidence type="ECO:0000250" key="1"/>
<evidence type="ECO:0000305" key="2"/>
<feature type="chain" id="PRO_0000276998" description="Small ribosomal subunit protein uS3c">
    <location>
        <begin position="1"/>
        <end position="220"/>
    </location>
</feature>
<feature type="domain" description="KH type-2">
    <location>
        <begin position="43"/>
        <end position="120"/>
    </location>
</feature>
<proteinExistence type="inferred from homology"/>
<accession>Q06GM1</accession>
<sequence>MGKKINPLGFRLGANQSHRSIWFAQSKSYSRGLQEDEKIRDCIQHYVEKNTRISSGFEGKGISHIEIQKKIDLIQVIIYMGSPNSLMEGRTRGIDELQTNVQKEFLSVNRRLNIAIIRVAKPYAQPTILAEHIALQLKNRVSFRKAMKSAIELTEQADTKGIQIQIAGRIDGKEIARVEWIREGRVPLQTIRAKIDYCSYTVRTIYGILGIKIWIFLDEK</sequence>
<comment type="subunit">
    <text evidence="1">Part of the 30S ribosomal subunit.</text>
</comment>
<comment type="subcellular location">
    <subcellularLocation>
        <location>Plastid</location>
        <location>Chloroplast</location>
    </subcellularLocation>
</comment>
<comment type="similarity">
    <text evidence="2">Belongs to the universal ribosomal protein uS3 family.</text>
</comment>
<protein>
    <recommendedName>
        <fullName evidence="2">Small ribosomal subunit protein uS3c</fullName>
    </recommendedName>
    <alternativeName>
        <fullName>30S ribosomal protein S3, chloroplastic</fullName>
    </alternativeName>
</protein>
<organism>
    <name type="scientific">Piper cenocladum</name>
    <name type="common">Ant piper</name>
    <dbReference type="NCBI Taxonomy" id="398741"/>
    <lineage>
        <taxon>Eukaryota</taxon>
        <taxon>Viridiplantae</taxon>
        <taxon>Streptophyta</taxon>
        <taxon>Embryophyta</taxon>
        <taxon>Tracheophyta</taxon>
        <taxon>Spermatophyta</taxon>
        <taxon>Magnoliopsida</taxon>
        <taxon>Magnoliidae</taxon>
        <taxon>Piperales</taxon>
        <taxon>Piperaceae</taxon>
        <taxon>Piper</taxon>
    </lineage>
</organism>
<dbReference type="EMBL" id="DQ887677">
    <property type="protein sequence ID" value="ABI14510.1"/>
    <property type="molecule type" value="Genomic_DNA"/>
</dbReference>
<dbReference type="RefSeq" id="YP_784512.1">
    <property type="nucleotide sequence ID" value="NC_008457.1"/>
</dbReference>
<dbReference type="SMR" id="Q06GM1"/>
<dbReference type="GeneID" id="4363657"/>
<dbReference type="GO" id="GO:0009507">
    <property type="term" value="C:chloroplast"/>
    <property type="evidence" value="ECO:0007669"/>
    <property type="project" value="UniProtKB-SubCell"/>
</dbReference>
<dbReference type="GO" id="GO:0022627">
    <property type="term" value="C:cytosolic small ribosomal subunit"/>
    <property type="evidence" value="ECO:0007669"/>
    <property type="project" value="TreeGrafter"/>
</dbReference>
<dbReference type="GO" id="GO:0019843">
    <property type="term" value="F:rRNA binding"/>
    <property type="evidence" value="ECO:0007669"/>
    <property type="project" value="UniProtKB-KW"/>
</dbReference>
<dbReference type="GO" id="GO:0003735">
    <property type="term" value="F:structural constituent of ribosome"/>
    <property type="evidence" value="ECO:0007669"/>
    <property type="project" value="InterPro"/>
</dbReference>
<dbReference type="GO" id="GO:0006412">
    <property type="term" value="P:translation"/>
    <property type="evidence" value="ECO:0007669"/>
    <property type="project" value="UniProtKB-UniRule"/>
</dbReference>
<dbReference type="CDD" id="cd02412">
    <property type="entry name" value="KH-II_30S_S3"/>
    <property type="match status" value="1"/>
</dbReference>
<dbReference type="FunFam" id="3.30.1140.32:FF:000003">
    <property type="entry name" value="30S ribosomal protein S3, chloroplastic"/>
    <property type="match status" value="1"/>
</dbReference>
<dbReference type="FunFam" id="3.30.300.20:FF:000008">
    <property type="entry name" value="30S ribosomal protein S3, chloroplastic"/>
    <property type="match status" value="1"/>
</dbReference>
<dbReference type="Gene3D" id="3.30.300.20">
    <property type="match status" value="1"/>
</dbReference>
<dbReference type="Gene3D" id="3.30.1140.32">
    <property type="entry name" value="Ribosomal protein S3, C-terminal domain"/>
    <property type="match status" value="1"/>
</dbReference>
<dbReference type="HAMAP" id="MF_01309_B">
    <property type="entry name" value="Ribosomal_uS3_B"/>
    <property type="match status" value="1"/>
</dbReference>
<dbReference type="InterPro" id="IPR015946">
    <property type="entry name" value="KH_dom-like_a/b"/>
</dbReference>
<dbReference type="InterPro" id="IPR009019">
    <property type="entry name" value="KH_sf_prok-type"/>
</dbReference>
<dbReference type="InterPro" id="IPR036419">
    <property type="entry name" value="Ribosomal_S3_C_sf"/>
</dbReference>
<dbReference type="InterPro" id="IPR005704">
    <property type="entry name" value="Ribosomal_uS3_bac-typ"/>
</dbReference>
<dbReference type="InterPro" id="IPR001351">
    <property type="entry name" value="Ribosomal_uS3_C"/>
</dbReference>
<dbReference type="InterPro" id="IPR018280">
    <property type="entry name" value="Ribosomal_uS3_CS"/>
</dbReference>
<dbReference type="NCBIfam" id="TIGR01009">
    <property type="entry name" value="rpsC_bact"/>
    <property type="match status" value="1"/>
</dbReference>
<dbReference type="PANTHER" id="PTHR11760">
    <property type="entry name" value="30S/40S RIBOSOMAL PROTEIN S3"/>
    <property type="match status" value="1"/>
</dbReference>
<dbReference type="PANTHER" id="PTHR11760:SF19">
    <property type="entry name" value="SMALL RIBOSOMAL SUBUNIT PROTEIN US3C"/>
    <property type="match status" value="1"/>
</dbReference>
<dbReference type="Pfam" id="PF00189">
    <property type="entry name" value="Ribosomal_S3_C"/>
    <property type="match status" value="1"/>
</dbReference>
<dbReference type="SUPFAM" id="SSF54814">
    <property type="entry name" value="Prokaryotic type KH domain (KH-domain type II)"/>
    <property type="match status" value="1"/>
</dbReference>
<dbReference type="SUPFAM" id="SSF54821">
    <property type="entry name" value="Ribosomal protein S3 C-terminal domain"/>
    <property type="match status" value="1"/>
</dbReference>
<dbReference type="PROSITE" id="PS00548">
    <property type="entry name" value="RIBOSOMAL_S3"/>
    <property type="match status" value="1"/>
</dbReference>
<geneLocation type="chloroplast"/>
<reference key="1">
    <citation type="journal article" date="2006" name="BMC Evol. Biol.">
        <title>Complete plastid genome sequences of Drimys, Liriodendron, and Piper: implications for the phylogenetic relationships of magnoliids.</title>
        <authorList>
            <person name="Cai Z."/>
            <person name="Penaflor C."/>
            <person name="Kuehl J.V."/>
            <person name="Leebens-Mack J."/>
            <person name="Carlson J.E."/>
            <person name="dePamphilis C.W."/>
            <person name="Boore J.L."/>
            <person name="Jansen R.K."/>
        </authorList>
    </citation>
    <scope>NUCLEOTIDE SEQUENCE [LARGE SCALE GENOMIC DNA]</scope>
</reference>
<name>RR3_PIPCE</name>
<keyword id="KW-0150">Chloroplast</keyword>
<keyword id="KW-0934">Plastid</keyword>
<keyword id="KW-0687">Ribonucleoprotein</keyword>
<keyword id="KW-0689">Ribosomal protein</keyword>
<keyword id="KW-0694">RNA-binding</keyword>
<keyword id="KW-0699">rRNA-binding</keyword>
<gene>
    <name type="primary">rps3</name>
</gene>